<comment type="function">
    <text evidence="1">Catalyzes the transfer of an acyl group from acyl-phosphate (acyl-PO(4)) to glycerol-3-phosphate (G3P) to form lysophosphatidic acid (LPA). This enzyme utilizes acyl-phosphate as fatty acyl donor, but not acyl-CoA or acyl-ACP.</text>
</comment>
<comment type="catalytic activity">
    <reaction evidence="1">
        <text>an acyl phosphate + sn-glycerol 3-phosphate = a 1-acyl-sn-glycero-3-phosphate + phosphate</text>
        <dbReference type="Rhea" id="RHEA:34075"/>
        <dbReference type="ChEBI" id="CHEBI:43474"/>
        <dbReference type="ChEBI" id="CHEBI:57597"/>
        <dbReference type="ChEBI" id="CHEBI:57970"/>
        <dbReference type="ChEBI" id="CHEBI:59918"/>
        <dbReference type="EC" id="2.3.1.275"/>
    </reaction>
</comment>
<comment type="pathway">
    <text evidence="1">Lipid metabolism; phospholipid metabolism.</text>
</comment>
<comment type="subunit">
    <text evidence="1">Probably interacts with PlsX.</text>
</comment>
<comment type="subcellular location">
    <subcellularLocation>
        <location evidence="1">Cell inner membrane</location>
        <topology evidence="1">Multi-pass membrane protein</topology>
    </subcellularLocation>
</comment>
<comment type="similarity">
    <text evidence="1">Belongs to the PlsY family.</text>
</comment>
<reference key="1">
    <citation type="submission" date="2007-03" db="EMBL/GenBank/DDBJ databases">
        <title>Complete sequence of chromosome 1 of Burkholderia vietnamiensis G4.</title>
        <authorList>
            <consortium name="US DOE Joint Genome Institute"/>
            <person name="Copeland A."/>
            <person name="Lucas S."/>
            <person name="Lapidus A."/>
            <person name="Barry K."/>
            <person name="Detter J.C."/>
            <person name="Glavina del Rio T."/>
            <person name="Hammon N."/>
            <person name="Israni S."/>
            <person name="Dalin E."/>
            <person name="Tice H."/>
            <person name="Pitluck S."/>
            <person name="Chain P."/>
            <person name="Malfatti S."/>
            <person name="Shin M."/>
            <person name="Vergez L."/>
            <person name="Schmutz J."/>
            <person name="Larimer F."/>
            <person name="Land M."/>
            <person name="Hauser L."/>
            <person name="Kyrpides N."/>
            <person name="Tiedje J."/>
            <person name="Richardson P."/>
        </authorList>
    </citation>
    <scope>NUCLEOTIDE SEQUENCE [LARGE SCALE GENOMIC DNA]</scope>
    <source>
        <strain>G4 / LMG 22486</strain>
    </source>
</reference>
<organism>
    <name type="scientific">Burkholderia vietnamiensis (strain G4 / LMG 22486)</name>
    <name type="common">Burkholderia cepacia (strain R1808)</name>
    <dbReference type="NCBI Taxonomy" id="269482"/>
    <lineage>
        <taxon>Bacteria</taxon>
        <taxon>Pseudomonadati</taxon>
        <taxon>Pseudomonadota</taxon>
        <taxon>Betaproteobacteria</taxon>
        <taxon>Burkholderiales</taxon>
        <taxon>Burkholderiaceae</taxon>
        <taxon>Burkholderia</taxon>
        <taxon>Burkholderia cepacia complex</taxon>
    </lineage>
</organism>
<sequence>MQILLAALVAYLIGSVSFAVIVSAAMGLADPRSYGSKNPGATNVLRSGNKKAAILTLVGDAFKGWLAVWLARHFGMPDVAVAWVAIAVFVGHLYPVFFRFQGGKGVATAAGVLLAVHPVLGLATALTWLIVAFFFRYSSLAALVAAVFAPVFDVFLFGTRNNPIAWAVLAMSVLLVWRHRGNIAKLLAGQESRIGDKKKAAADGGAQGGGKV</sequence>
<name>PLSY_BURVG</name>
<evidence type="ECO:0000255" key="1">
    <source>
        <dbReference type="HAMAP-Rule" id="MF_01043"/>
    </source>
</evidence>
<feature type="chain" id="PRO_1000064163" description="Glycerol-3-phosphate acyltransferase">
    <location>
        <begin position="1"/>
        <end position="212"/>
    </location>
</feature>
<feature type="transmembrane region" description="Helical" evidence="1">
    <location>
        <begin position="3"/>
        <end position="23"/>
    </location>
</feature>
<feature type="transmembrane region" description="Helical" evidence="1">
    <location>
        <begin position="51"/>
        <end position="71"/>
    </location>
</feature>
<feature type="transmembrane region" description="Helical" evidence="1">
    <location>
        <begin position="78"/>
        <end position="98"/>
    </location>
</feature>
<feature type="transmembrane region" description="Helical" evidence="1">
    <location>
        <begin position="115"/>
        <end position="135"/>
    </location>
</feature>
<feature type="transmembrane region" description="Helical" evidence="1">
    <location>
        <begin position="139"/>
        <end position="159"/>
    </location>
</feature>
<protein>
    <recommendedName>
        <fullName evidence="1">Glycerol-3-phosphate acyltransferase</fullName>
    </recommendedName>
    <alternativeName>
        <fullName evidence="1">Acyl-PO4 G3P acyltransferase</fullName>
    </alternativeName>
    <alternativeName>
        <fullName evidence="1">Acyl-phosphate--glycerol-3-phosphate acyltransferase</fullName>
    </alternativeName>
    <alternativeName>
        <fullName evidence="1">G3P acyltransferase</fullName>
        <shortName evidence="1">GPAT</shortName>
        <ecNumber evidence="1">2.3.1.275</ecNumber>
    </alternativeName>
    <alternativeName>
        <fullName evidence="1">Lysophosphatidic acid synthase</fullName>
        <shortName evidence="1">LPA synthase</shortName>
    </alternativeName>
</protein>
<dbReference type="EC" id="2.3.1.275" evidence="1"/>
<dbReference type="EMBL" id="CP000614">
    <property type="protein sequence ID" value="ABO55641.1"/>
    <property type="molecule type" value="Genomic_DNA"/>
</dbReference>
<dbReference type="SMR" id="A4JH88"/>
<dbReference type="KEGG" id="bvi:Bcep1808_2649"/>
<dbReference type="eggNOG" id="COG0344">
    <property type="taxonomic scope" value="Bacteria"/>
</dbReference>
<dbReference type="HOGENOM" id="CLU_081254_0_0_4"/>
<dbReference type="UniPathway" id="UPA00085"/>
<dbReference type="Proteomes" id="UP000002287">
    <property type="component" value="Chromosome 1"/>
</dbReference>
<dbReference type="GO" id="GO:0005886">
    <property type="term" value="C:plasma membrane"/>
    <property type="evidence" value="ECO:0007669"/>
    <property type="project" value="UniProtKB-SubCell"/>
</dbReference>
<dbReference type="GO" id="GO:0043772">
    <property type="term" value="F:acyl-phosphate glycerol-3-phosphate acyltransferase activity"/>
    <property type="evidence" value="ECO:0007669"/>
    <property type="project" value="UniProtKB-UniRule"/>
</dbReference>
<dbReference type="GO" id="GO:0008654">
    <property type="term" value="P:phospholipid biosynthetic process"/>
    <property type="evidence" value="ECO:0007669"/>
    <property type="project" value="UniProtKB-UniRule"/>
</dbReference>
<dbReference type="HAMAP" id="MF_01043">
    <property type="entry name" value="PlsY"/>
    <property type="match status" value="1"/>
</dbReference>
<dbReference type="InterPro" id="IPR003811">
    <property type="entry name" value="G3P_acylTferase_PlsY"/>
</dbReference>
<dbReference type="NCBIfam" id="TIGR00023">
    <property type="entry name" value="glycerol-3-phosphate 1-O-acyltransferase PlsY"/>
    <property type="match status" value="1"/>
</dbReference>
<dbReference type="PANTHER" id="PTHR30309:SF0">
    <property type="entry name" value="GLYCEROL-3-PHOSPHATE ACYLTRANSFERASE-RELATED"/>
    <property type="match status" value="1"/>
</dbReference>
<dbReference type="PANTHER" id="PTHR30309">
    <property type="entry name" value="INNER MEMBRANE PROTEIN YGIH"/>
    <property type="match status" value="1"/>
</dbReference>
<dbReference type="Pfam" id="PF02660">
    <property type="entry name" value="G3P_acyltransf"/>
    <property type="match status" value="1"/>
</dbReference>
<dbReference type="SMART" id="SM01207">
    <property type="entry name" value="G3P_acyltransf"/>
    <property type="match status" value="1"/>
</dbReference>
<gene>
    <name evidence="1" type="primary">plsY</name>
    <name type="ordered locus">Bcep1808_2649</name>
</gene>
<keyword id="KW-0997">Cell inner membrane</keyword>
<keyword id="KW-1003">Cell membrane</keyword>
<keyword id="KW-0444">Lipid biosynthesis</keyword>
<keyword id="KW-0443">Lipid metabolism</keyword>
<keyword id="KW-0472">Membrane</keyword>
<keyword id="KW-0594">Phospholipid biosynthesis</keyword>
<keyword id="KW-1208">Phospholipid metabolism</keyword>
<keyword id="KW-0808">Transferase</keyword>
<keyword id="KW-0812">Transmembrane</keyword>
<keyword id="KW-1133">Transmembrane helix</keyword>
<proteinExistence type="inferred from homology"/>
<accession>A4JH88</accession>